<name>SSRP_SHESM</name>
<feature type="chain" id="PRO_1000002143" description="SsrA-binding protein">
    <location>
        <begin position="1"/>
        <end position="163"/>
    </location>
</feature>
<comment type="function">
    <text evidence="1">Required for rescue of stalled ribosomes mediated by trans-translation. Binds to transfer-messenger RNA (tmRNA), required for stable association of tmRNA with ribosomes. tmRNA and SmpB together mimic tRNA shape, replacing the anticodon stem-loop with SmpB. tmRNA is encoded by the ssrA gene; the 2 termini fold to resemble tRNA(Ala) and it encodes a 'tag peptide', a short internal open reading frame. During trans-translation Ala-aminoacylated tmRNA acts like a tRNA, entering the A-site of stalled ribosomes, displacing the stalled mRNA. The ribosome then switches to translate the ORF on the tmRNA; the nascent peptide is terminated with the 'tag peptide' encoded by the tmRNA and targeted for degradation. The ribosome is freed to recommence translation, which seems to be the essential function of trans-translation.</text>
</comment>
<comment type="subcellular location">
    <subcellularLocation>
        <location evidence="1">Cytoplasm</location>
    </subcellularLocation>
    <text evidence="1">The tmRNA-SmpB complex associates with stalled 70S ribosomes.</text>
</comment>
<comment type="similarity">
    <text evidence="1">Belongs to the SmpB family.</text>
</comment>
<organism>
    <name type="scientific">Shewanella sp. (strain MR-4)</name>
    <dbReference type="NCBI Taxonomy" id="60480"/>
    <lineage>
        <taxon>Bacteria</taxon>
        <taxon>Pseudomonadati</taxon>
        <taxon>Pseudomonadota</taxon>
        <taxon>Gammaproteobacteria</taxon>
        <taxon>Alteromonadales</taxon>
        <taxon>Shewanellaceae</taxon>
        <taxon>Shewanella</taxon>
    </lineage>
</organism>
<gene>
    <name evidence="1" type="primary">smpB</name>
    <name type="ordered locus">Shewmr4_2776</name>
</gene>
<dbReference type="EMBL" id="CP000446">
    <property type="protein sequence ID" value="ABI39847.1"/>
    <property type="molecule type" value="Genomic_DNA"/>
</dbReference>
<dbReference type="RefSeq" id="WP_011623527.1">
    <property type="nucleotide sequence ID" value="NC_008321.1"/>
</dbReference>
<dbReference type="SMR" id="Q0HGH0"/>
<dbReference type="GeneID" id="94728886"/>
<dbReference type="KEGG" id="she:Shewmr4_2776"/>
<dbReference type="HOGENOM" id="CLU_108953_3_0_6"/>
<dbReference type="GO" id="GO:0005829">
    <property type="term" value="C:cytosol"/>
    <property type="evidence" value="ECO:0007669"/>
    <property type="project" value="TreeGrafter"/>
</dbReference>
<dbReference type="GO" id="GO:0003723">
    <property type="term" value="F:RNA binding"/>
    <property type="evidence" value="ECO:0007669"/>
    <property type="project" value="UniProtKB-UniRule"/>
</dbReference>
<dbReference type="GO" id="GO:0070929">
    <property type="term" value="P:trans-translation"/>
    <property type="evidence" value="ECO:0007669"/>
    <property type="project" value="UniProtKB-UniRule"/>
</dbReference>
<dbReference type="CDD" id="cd09294">
    <property type="entry name" value="SmpB"/>
    <property type="match status" value="1"/>
</dbReference>
<dbReference type="Gene3D" id="2.40.280.10">
    <property type="match status" value="1"/>
</dbReference>
<dbReference type="HAMAP" id="MF_00023">
    <property type="entry name" value="SmpB"/>
    <property type="match status" value="1"/>
</dbReference>
<dbReference type="InterPro" id="IPR023620">
    <property type="entry name" value="SmpB"/>
</dbReference>
<dbReference type="InterPro" id="IPR000037">
    <property type="entry name" value="SsrA-bd_prot"/>
</dbReference>
<dbReference type="InterPro" id="IPR020081">
    <property type="entry name" value="SsrA-bd_prot_CS"/>
</dbReference>
<dbReference type="NCBIfam" id="NF003843">
    <property type="entry name" value="PRK05422.1"/>
    <property type="match status" value="1"/>
</dbReference>
<dbReference type="NCBIfam" id="TIGR00086">
    <property type="entry name" value="smpB"/>
    <property type="match status" value="1"/>
</dbReference>
<dbReference type="PANTHER" id="PTHR30308:SF2">
    <property type="entry name" value="SSRA-BINDING PROTEIN"/>
    <property type="match status" value="1"/>
</dbReference>
<dbReference type="PANTHER" id="PTHR30308">
    <property type="entry name" value="TMRNA-BINDING COMPONENT OF TRANS-TRANSLATION TAGGING COMPLEX"/>
    <property type="match status" value="1"/>
</dbReference>
<dbReference type="Pfam" id="PF01668">
    <property type="entry name" value="SmpB"/>
    <property type="match status" value="1"/>
</dbReference>
<dbReference type="SUPFAM" id="SSF74982">
    <property type="entry name" value="Small protein B (SmpB)"/>
    <property type="match status" value="1"/>
</dbReference>
<dbReference type="PROSITE" id="PS01317">
    <property type="entry name" value="SSRP"/>
    <property type="match status" value="1"/>
</dbReference>
<protein>
    <recommendedName>
        <fullName evidence="1">SsrA-binding protein</fullName>
    </recommendedName>
    <alternativeName>
        <fullName evidence="1">Small protein B</fullName>
    </alternativeName>
</protein>
<reference key="1">
    <citation type="submission" date="2006-08" db="EMBL/GenBank/DDBJ databases">
        <title>Complete sequence of Shewanella sp. MR-4.</title>
        <authorList>
            <consortium name="US DOE Joint Genome Institute"/>
            <person name="Copeland A."/>
            <person name="Lucas S."/>
            <person name="Lapidus A."/>
            <person name="Barry K."/>
            <person name="Detter J.C."/>
            <person name="Glavina del Rio T."/>
            <person name="Hammon N."/>
            <person name="Israni S."/>
            <person name="Dalin E."/>
            <person name="Tice H."/>
            <person name="Pitluck S."/>
            <person name="Kiss H."/>
            <person name="Brettin T."/>
            <person name="Bruce D."/>
            <person name="Han C."/>
            <person name="Tapia R."/>
            <person name="Gilna P."/>
            <person name="Schmutz J."/>
            <person name="Larimer F."/>
            <person name="Land M."/>
            <person name="Hauser L."/>
            <person name="Kyrpides N."/>
            <person name="Mikhailova N."/>
            <person name="Nealson K."/>
            <person name="Konstantinidis K."/>
            <person name="Klappenbach J."/>
            <person name="Tiedje J."/>
            <person name="Richardson P."/>
        </authorList>
    </citation>
    <scope>NUCLEOTIDE SEQUENCE [LARGE SCALE GENOMIC DNA]</scope>
    <source>
        <strain>MR-4</strain>
    </source>
</reference>
<sequence>MVKKNSKKAAPATIARNKRATFEYRFEEKMEAGISLMGWEVKSIRMGKVNLSDCYVFLKNGEAFMHGCTIIPLNTASTHVVCDPIRLKKLLLSRKELDKLAGLVERQGYSIIPISMYWRKGAWVKVEIGLGKGKKDHDKREDTKAREWEVEKARVMKKEKTRG</sequence>
<proteinExistence type="inferred from homology"/>
<accession>Q0HGH0</accession>
<evidence type="ECO:0000255" key="1">
    <source>
        <dbReference type="HAMAP-Rule" id="MF_00023"/>
    </source>
</evidence>
<keyword id="KW-0963">Cytoplasm</keyword>
<keyword id="KW-0694">RNA-binding</keyword>